<feature type="chain" id="PRO_1000076364" description="Tryptophan synthase alpha chain">
    <location>
        <begin position="1"/>
        <end position="261"/>
    </location>
</feature>
<feature type="active site" description="Proton acceptor" evidence="1">
    <location>
        <position position="49"/>
    </location>
</feature>
<feature type="active site" description="Proton acceptor" evidence="1">
    <location>
        <position position="60"/>
    </location>
</feature>
<protein>
    <recommendedName>
        <fullName evidence="1">Tryptophan synthase alpha chain</fullName>
        <ecNumber evidence="1">4.2.1.20</ecNumber>
    </recommendedName>
</protein>
<sequence length="261" mass="28137">MSRIADTFARLRAAGRTALMPYLMTGYPERDSVLDLAPALEDAGADLFELGVPFSDPLADGATIQRASERALANGVRLEHCIATIAVLRERGVRAPIVPMGYYNPFLQYGLARLARDMAAAGADGLIIPDLPPEEAQECHAACREYGLDLIFFVAPTTPDERIARITALASGFIYCVSLTGVTGARRELWSGLPAFLERVRRHTTLPLVVGFGISSADHVREVGRHAAGAIVASALINVIEQSHPGEYVARAAEFVRLLRG</sequence>
<accession>A7NKL7</accession>
<proteinExistence type="inferred from homology"/>
<name>TRPA_ROSCS</name>
<reference key="1">
    <citation type="submission" date="2007-08" db="EMBL/GenBank/DDBJ databases">
        <title>Complete sequence of Roseiflexus castenholzii DSM 13941.</title>
        <authorList>
            <consortium name="US DOE Joint Genome Institute"/>
            <person name="Copeland A."/>
            <person name="Lucas S."/>
            <person name="Lapidus A."/>
            <person name="Barry K."/>
            <person name="Glavina del Rio T."/>
            <person name="Dalin E."/>
            <person name="Tice H."/>
            <person name="Pitluck S."/>
            <person name="Thompson L.S."/>
            <person name="Brettin T."/>
            <person name="Bruce D."/>
            <person name="Detter J.C."/>
            <person name="Han C."/>
            <person name="Tapia R."/>
            <person name="Schmutz J."/>
            <person name="Larimer F."/>
            <person name="Land M."/>
            <person name="Hauser L."/>
            <person name="Kyrpides N."/>
            <person name="Mikhailova N."/>
            <person name="Bryant D.A."/>
            <person name="Hanada S."/>
            <person name="Tsukatani Y."/>
            <person name="Richardson P."/>
        </authorList>
    </citation>
    <scope>NUCLEOTIDE SEQUENCE [LARGE SCALE GENOMIC DNA]</scope>
    <source>
        <strain>DSM 13941 / HLO8</strain>
    </source>
</reference>
<keyword id="KW-0028">Amino-acid biosynthesis</keyword>
<keyword id="KW-0057">Aromatic amino acid biosynthesis</keyword>
<keyword id="KW-0456">Lyase</keyword>
<keyword id="KW-1185">Reference proteome</keyword>
<keyword id="KW-0822">Tryptophan biosynthesis</keyword>
<organism>
    <name type="scientific">Roseiflexus castenholzii (strain DSM 13941 / HLO8)</name>
    <dbReference type="NCBI Taxonomy" id="383372"/>
    <lineage>
        <taxon>Bacteria</taxon>
        <taxon>Bacillati</taxon>
        <taxon>Chloroflexota</taxon>
        <taxon>Chloroflexia</taxon>
        <taxon>Chloroflexales</taxon>
        <taxon>Roseiflexineae</taxon>
        <taxon>Roseiflexaceae</taxon>
        <taxon>Roseiflexus</taxon>
    </lineage>
</organism>
<comment type="function">
    <text evidence="1">The alpha subunit is responsible for the aldol cleavage of indoleglycerol phosphate to indole and glyceraldehyde 3-phosphate.</text>
</comment>
<comment type="catalytic activity">
    <reaction evidence="1">
        <text>(1S,2R)-1-C-(indol-3-yl)glycerol 3-phosphate + L-serine = D-glyceraldehyde 3-phosphate + L-tryptophan + H2O</text>
        <dbReference type="Rhea" id="RHEA:10532"/>
        <dbReference type="ChEBI" id="CHEBI:15377"/>
        <dbReference type="ChEBI" id="CHEBI:33384"/>
        <dbReference type="ChEBI" id="CHEBI:57912"/>
        <dbReference type="ChEBI" id="CHEBI:58866"/>
        <dbReference type="ChEBI" id="CHEBI:59776"/>
        <dbReference type="EC" id="4.2.1.20"/>
    </reaction>
</comment>
<comment type="pathway">
    <text evidence="1">Amino-acid biosynthesis; L-tryptophan biosynthesis; L-tryptophan from chorismate: step 5/5.</text>
</comment>
<comment type="subunit">
    <text evidence="1">Tetramer of two alpha and two beta chains.</text>
</comment>
<comment type="similarity">
    <text evidence="1">Belongs to the TrpA family.</text>
</comment>
<evidence type="ECO:0000255" key="1">
    <source>
        <dbReference type="HAMAP-Rule" id="MF_00131"/>
    </source>
</evidence>
<gene>
    <name evidence="1" type="primary">trpA</name>
    <name type="ordered locus">Rcas_1948</name>
</gene>
<dbReference type="EC" id="4.2.1.20" evidence="1"/>
<dbReference type="EMBL" id="CP000804">
    <property type="protein sequence ID" value="ABU58037.1"/>
    <property type="molecule type" value="Genomic_DNA"/>
</dbReference>
<dbReference type="RefSeq" id="WP_012120461.1">
    <property type="nucleotide sequence ID" value="NC_009767.1"/>
</dbReference>
<dbReference type="SMR" id="A7NKL7"/>
<dbReference type="STRING" id="383372.Rcas_1948"/>
<dbReference type="KEGG" id="rca:Rcas_1948"/>
<dbReference type="eggNOG" id="COG0159">
    <property type="taxonomic scope" value="Bacteria"/>
</dbReference>
<dbReference type="HOGENOM" id="CLU_016734_0_0_0"/>
<dbReference type="OrthoDB" id="9804578at2"/>
<dbReference type="UniPathway" id="UPA00035">
    <property type="reaction ID" value="UER00044"/>
</dbReference>
<dbReference type="Proteomes" id="UP000000263">
    <property type="component" value="Chromosome"/>
</dbReference>
<dbReference type="GO" id="GO:0005829">
    <property type="term" value="C:cytosol"/>
    <property type="evidence" value="ECO:0007669"/>
    <property type="project" value="TreeGrafter"/>
</dbReference>
<dbReference type="GO" id="GO:0004834">
    <property type="term" value="F:tryptophan synthase activity"/>
    <property type="evidence" value="ECO:0007669"/>
    <property type="project" value="UniProtKB-UniRule"/>
</dbReference>
<dbReference type="CDD" id="cd04724">
    <property type="entry name" value="Tryptophan_synthase_alpha"/>
    <property type="match status" value="1"/>
</dbReference>
<dbReference type="FunFam" id="3.20.20.70:FF:000037">
    <property type="entry name" value="Tryptophan synthase alpha chain"/>
    <property type="match status" value="1"/>
</dbReference>
<dbReference type="Gene3D" id="3.20.20.70">
    <property type="entry name" value="Aldolase class I"/>
    <property type="match status" value="1"/>
</dbReference>
<dbReference type="HAMAP" id="MF_00131">
    <property type="entry name" value="Trp_synth_alpha"/>
    <property type="match status" value="1"/>
</dbReference>
<dbReference type="InterPro" id="IPR013785">
    <property type="entry name" value="Aldolase_TIM"/>
</dbReference>
<dbReference type="InterPro" id="IPR011060">
    <property type="entry name" value="RibuloseP-bd_barrel"/>
</dbReference>
<dbReference type="InterPro" id="IPR002028">
    <property type="entry name" value="Trp_synthase_suA"/>
</dbReference>
<dbReference type="NCBIfam" id="TIGR00262">
    <property type="entry name" value="trpA"/>
    <property type="match status" value="1"/>
</dbReference>
<dbReference type="PANTHER" id="PTHR43406:SF1">
    <property type="entry name" value="TRYPTOPHAN SYNTHASE ALPHA CHAIN, CHLOROPLASTIC"/>
    <property type="match status" value="1"/>
</dbReference>
<dbReference type="PANTHER" id="PTHR43406">
    <property type="entry name" value="TRYPTOPHAN SYNTHASE, ALPHA CHAIN"/>
    <property type="match status" value="1"/>
</dbReference>
<dbReference type="Pfam" id="PF00290">
    <property type="entry name" value="Trp_syntA"/>
    <property type="match status" value="1"/>
</dbReference>
<dbReference type="SUPFAM" id="SSF51366">
    <property type="entry name" value="Ribulose-phoshate binding barrel"/>
    <property type="match status" value="1"/>
</dbReference>